<comment type="function">
    <text evidence="1">Endonuclease IV plays a role in DNA repair. It cleaves phosphodiester bonds at apurinic or apyrimidinic (AP) sites, generating a 3'-hydroxyl group and a 5'-terminal sugar phosphate.</text>
</comment>
<comment type="catalytic activity">
    <reaction evidence="1">
        <text>Endonucleolytic cleavage to 5'-phosphooligonucleotide end-products.</text>
        <dbReference type="EC" id="3.1.21.2"/>
    </reaction>
</comment>
<comment type="cofactor">
    <cofactor evidence="1">
        <name>Zn(2+)</name>
        <dbReference type="ChEBI" id="CHEBI:29105"/>
    </cofactor>
    <text evidence="1">Binds 3 Zn(2+) ions.</text>
</comment>
<comment type="similarity">
    <text evidence="1">Belongs to the AP endonuclease 2 family.</text>
</comment>
<organism>
    <name type="scientific">Geobacillus sp. (strain WCH70)</name>
    <dbReference type="NCBI Taxonomy" id="471223"/>
    <lineage>
        <taxon>Bacteria</taxon>
        <taxon>Bacillati</taxon>
        <taxon>Bacillota</taxon>
        <taxon>Bacilli</taxon>
        <taxon>Bacillales</taxon>
        <taxon>Anoxybacillaceae</taxon>
        <taxon>Geobacillus</taxon>
    </lineage>
</organism>
<proteinExistence type="inferred from homology"/>
<sequence length="298" mass="33094">MLKIGSHVSMSGKKMLLAASEEAVSYGANTFMIYTGAPQNTRRKKIEELNIEAGLAHMKEHGIEEIVVHAPYIINIGNTKNPDTFALGVEFLRSEIERTEAIGAKQIVLHPGAHVGAGPEAGIRKIIEGLNEVLTREQTVQIALETMAGKGSECGRSFEELAQIIDGVTHNEKLSVCFDTCHTHDAGYNIVDDFDGVLEEFDRIIGLDRLKVLHINDSKNPRGSRKDRHENIGFGHIGFAALNYIVHHPQLADIPKILETPYVGEDKNNKKPPYKHEIAMLRAQVFDEELLTKIMNDE</sequence>
<reference key="1">
    <citation type="submission" date="2009-06" db="EMBL/GenBank/DDBJ databases">
        <title>Complete sequence of chromosome of Geopacillus sp. WCH70.</title>
        <authorList>
            <consortium name="US DOE Joint Genome Institute"/>
            <person name="Lucas S."/>
            <person name="Copeland A."/>
            <person name="Lapidus A."/>
            <person name="Glavina del Rio T."/>
            <person name="Dalin E."/>
            <person name="Tice H."/>
            <person name="Bruce D."/>
            <person name="Goodwin L."/>
            <person name="Pitluck S."/>
            <person name="Chertkov O."/>
            <person name="Brettin T."/>
            <person name="Detter J.C."/>
            <person name="Han C."/>
            <person name="Larimer F."/>
            <person name="Land M."/>
            <person name="Hauser L."/>
            <person name="Kyrpides N."/>
            <person name="Mikhailova N."/>
            <person name="Brumm P."/>
            <person name="Mead D.A."/>
            <person name="Richardson P."/>
        </authorList>
    </citation>
    <scope>NUCLEOTIDE SEQUENCE [LARGE SCALE GENOMIC DNA]</scope>
    <source>
        <strain>WCH70</strain>
    </source>
</reference>
<name>END4_GEOSW</name>
<dbReference type="EC" id="3.1.21.2" evidence="1"/>
<dbReference type="EMBL" id="CP001638">
    <property type="protein sequence ID" value="ACS25102.1"/>
    <property type="molecule type" value="Genomic_DNA"/>
</dbReference>
<dbReference type="SMR" id="C5D4R0"/>
<dbReference type="STRING" id="471223.GWCH70_2406"/>
<dbReference type="KEGG" id="gwc:GWCH70_2406"/>
<dbReference type="eggNOG" id="COG0648">
    <property type="taxonomic scope" value="Bacteria"/>
</dbReference>
<dbReference type="HOGENOM" id="CLU_025885_4_1_9"/>
<dbReference type="OrthoDB" id="9805666at2"/>
<dbReference type="GO" id="GO:0008833">
    <property type="term" value="F:deoxyribonuclease IV (phage-T4-induced) activity"/>
    <property type="evidence" value="ECO:0007669"/>
    <property type="project" value="UniProtKB-UniRule"/>
</dbReference>
<dbReference type="GO" id="GO:0003677">
    <property type="term" value="F:DNA binding"/>
    <property type="evidence" value="ECO:0007669"/>
    <property type="project" value="InterPro"/>
</dbReference>
<dbReference type="GO" id="GO:0003906">
    <property type="term" value="F:DNA-(apurinic or apyrimidinic site) endonuclease activity"/>
    <property type="evidence" value="ECO:0007669"/>
    <property type="project" value="TreeGrafter"/>
</dbReference>
<dbReference type="GO" id="GO:0008081">
    <property type="term" value="F:phosphoric diester hydrolase activity"/>
    <property type="evidence" value="ECO:0007669"/>
    <property type="project" value="TreeGrafter"/>
</dbReference>
<dbReference type="GO" id="GO:0008270">
    <property type="term" value="F:zinc ion binding"/>
    <property type="evidence" value="ECO:0007669"/>
    <property type="project" value="UniProtKB-UniRule"/>
</dbReference>
<dbReference type="GO" id="GO:0006284">
    <property type="term" value="P:base-excision repair"/>
    <property type="evidence" value="ECO:0007669"/>
    <property type="project" value="TreeGrafter"/>
</dbReference>
<dbReference type="CDD" id="cd00019">
    <property type="entry name" value="AP2Ec"/>
    <property type="match status" value="1"/>
</dbReference>
<dbReference type="FunFam" id="3.20.20.150:FF:000001">
    <property type="entry name" value="Probable endonuclease 4"/>
    <property type="match status" value="1"/>
</dbReference>
<dbReference type="Gene3D" id="3.20.20.150">
    <property type="entry name" value="Divalent-metal-dependent TIM barrel enzymes"/>
    <property type="match status" value="1"/>
</dbReference>
<dbReference type="HAMAP" id="MF_00152">
    <property type="entry name" value="Nfo"/>
    <property type="match status" value="1"/>
</dbReference>
<dbReference type="InterPro" id="IPR001719">
    <property type="entry name" value="AP_endonuc_2"/>
</dbReference>
<dbReference type="InterPro" id="IPR018246">
    <property type="entry name" value="AP_endonuc_F2_Zn_BS"/>
</dbReference>
<dbReference type="InterPro" id="IPR036237">
    <property type="entry name" value="Xyl_isomerase-like_sf"/>
</dbReference>
<dbReference type="InterPro" id="IPR013022">
    <property type="entry name" value="Xyl_isomerase-like_TIM-brl"/>
</dbReference>
<dbReference type="NCBIfam" id="TIGR00587">
    <property type="entry name" value="nfo"/>
    <property type="match status" value="1"/>
</dbReference>
<dbReference type="NCBIfam" id="NF002196">
    <property type="entry name" value="PRK01060.1-1"/>
    <property type="match status" value="1"/>
</dbReference>
<dbReference type="PANTHER" id="PTHR21445:SF0">
    <property type="entry name" value="APURINIC-APYRIMIDINIC ENDONUCLEASE"/>
    <property type="match status" value="1"/>
</dbReference>
<dbReference type="PANTHER" id="PTHR21445">
    <property type="entry name" value="ENDONUCLEASE IV ENDODEOXYRIBONUCLEASE IV"/>
    <property type="match status" value="1"/>
</dbReference>
<dbReference type="Pfam" id="PF01261">
    <property type="entry name" value="AP_endonuc_2"/>
    <property type="match status" value="1"/>
</dbReference>
<dbReference type="SMART" id="SM00518">
    <property type="entry name" value="AP2Ec"/>
    <property type="match status" value="1"/>
</dbReference>
<dbReference type="SUPFAM" id="SSF51658">
    <property type="entry name" value="Xylose isomerase-like"/>
    <property type="match status" value="1"/>
</dbReference>
<dbReference type="PROSITE" id="PS00729">
    <property type="entry name" value="AP_NUCLEASE_F2_1"/>
    <property type="match status" value="1"/>
</dbReference>
<dbReference type="PROSITE" id="PS00730">
    <property type="entry name" value="AP_NUCLEASE_F2_2"/>
    <property type="match status" value="1"/>
</dbReference>
<dbReference type="PROSITE" id="PS00731">
    <property type="entry name" value="AP_NUCLEASE_F2_3"/>
    <property type="match status" value="1"/>
</dbReference>
<dbReference type="PROSITE" id="PS51432">
    <property type="entry name" value="AP_NUCLEASE_F2_4"/>
    <property type="match status" value="1"/>
</dbReference>
<keyword id="KW-0227">DNA damage</keyword>
<keyword id="KW-0234">DNA repair</keyword>
<keyword id="KW-0255">Endonuclease</keyword>
<keyword id="KW-0378">Hydrolase</keyword>
<keyword id="KW-0479">Metal-binding</keyword>
<keyword id="KW-0540">Nuclease</keyword>
<keyword id="KW-0862">Zinc</keyword>
<accession>C5D4R0</accession>
<gene>
    <name evidence="1" type="primary">nfo</name>
    <name type="ordered locus">GWCH70_2406</name>
</gene>
<protein>
    <recommendedName>
        <fullName evidence="1">Probable endonuclease 4</fullName>
        <ecNumber evidence="1">3.1.21.2</ecNumber>
    </recommendedName>
    <alternativeName>
        <fullName evidence="1">Endodeoxyribonuclease IV</fullName>
    </alternativeName>
    <alternativeName>
        <fullName evidence="1">Endonuclease IV</fullName>
    </alternativeName>
</protein>
<feature type="chain" id="PRO_1000203440" description="Probable endonuclease 4">
    <location>
        <begin position="1"/>
        <end position="298"/>
    </location>
</feature>
<feature type="binding site" evidence="1">
    <location>
        <position position="69"/>
    </location>
    <ligand>
        <name>Zn(2+)</name>
        <dbReference type="ChEBI" id="CHEBI:29105"/>
        <label>1</label>
    </ligand>
</feature>
<feature type="binding site" evidence="1">
    <location>
        <position position="110"/>
    </location>
    <ligand>
        <name>Zn(2+)</name>
        <dbReference type="ChEBI" id="CHEBI:29105"/>
        <label>1</label>
    </ligand>
</feature>
<feature type="binding site" evidence="1">
    <location>
        <position position="145"/>
    </location>
    <ligand>
        <name>Zn(2+)</name>
        <dbReference type="ChEBI" id="CHEBI:29105"/>
        <label>1</label>
    </ligand>
</feature>
<feature type="binding site" evidence="1">
    <location>
        <position position="145"/>
    </location>
    <ligand>
        <name>Zn(2+)</name>
        <dbReference type="ChEBI" id="CHEBI:29105"/>
        <label>2</label>
    </ligand>
</feature>
<feature type="binding site" evidence="1">
    <location>
        <position position="179"/>
    </location>
    <ligand>
        <name>Zn(2+)</name>
        <dbReference type="ChEBI" id="CHEBI:29105"/>
        <label>2</label>
    </ligand>
</feature>
<feature type="binding site" evidence="1">
    <location>
        <position position="182"/>
    </location>
    <ligand>
        <name>Zn(2+)</name>
        <dbReference type="ChEBI" id="CHEBI:29105"/>
        <label>3</label>
    </ligand>
</feature>
<feature type="binding site" evidence="1">
    <location>
        <position position="214"/>
    </location>
    <ligand>
        <name>Zn(2+)</name>
        <dbReference type="ChEBI" id="CHEBI:29105"/>
        <label>2</label>
    </ligand>
</feature>
<feature type="binding site" evidence="1">
    <location>
        <position position="227"/>
    </location>
    <ligand>
        <name>Zn(2+)</name>
        <dbReference type="ChEBI" id="CHEBI:29105"/>
        <label>3</label>
    </ligand>
</feature>
<feature type="binding site" evidence="1">
    <location>
        <position position="229"/>
    </location>
    <ligand>
        <name>Zn(2+)</name>
        <dbReference type="ChEBI" id="CHEBI:29105"/>
        <label>3</label>
    </ligand>
</feature>
<feature type="binding site" evidence="1">
    <location>
        <position position="259"/>
    </location>
    <ligand>
        <name>Zn(2+)</name>
        <dbReference type="ChEBI" id="CHEBI:29105"/>
        <label>2</label>
    </ligand>
</feature>
<evidence type="ECO:0000255" key="1">
    <source>
        <dbReference type="HAMAP-Rule" id="MF_00152"/>
    </source>
</evidence>